<name>DTD_DICDI</name>
<comment type="function">
    <text evidence="1">An aminoacyl-tRNA editing enzyme that deacylates mischarged D-aminoacyl-tRNAs. Also deacylates mischarged glycyl-tRNA(Ala), protecting cells against glycine mischarging by AlaRS. Acts via tRNA-based rather than protein-based catalysis; rejects L-amino acids rather than detecting D-amino acids in the active site. By recycling D-aminoacyl-tRNA to D-amino acids and free tRNA molecules, this enzyme counteracts the toxicity associated with the formation of D-aminoacyl-tRNA entities in vivo and helps enforce protein L-homochirality.</text>
</comment>
<comment type="catalytic activity">
    <reaction evidence="1">
        <text>glycyl-tRNA(Ala) + H2O = tRNA(Ala) + glycine + H(+)</text>
        <dbReference type="Rhea" id="RHEA:53744"/>
        <dbReference type="Rhea" id="RHEA-COMP:9657"/>
        <dbReference type="Rhea" id="RHEA-COMP:13640"/>
        <dbReference type="ChEBI" id="CHEBI:15377"/>
        <dbReference type="ChEBI" id="CHEBI:15378"/>
        <dbReference type="ChEBI" id="CHEBI:57305"/>
        <dbReference type="ChEBI" id="CHEBI:78442"/>
        <dbReference type="ChEBI" id="CHEBI:78522"/>
        <dbReference type="EC" id="3.1.1.96"/>
    </reaction>
</comment>
<comment type="catalytic activity">
    <reaction evidence="1">
        <text>a D-aminoacyl-tRNA + H2O = a tRNA + a D-alpha-amino acid + H(+)</text>
        <dbReference type="Rhea" id="RHEA:13953"/>
        <dbReference type="Rhea" id="RHEA-COMP:10123"/>
        <dbReference type="Rhea" id="RHEA-COMP:10124"/>
        <dbReference type="ChEBI" id="CHEBI:15377"/>
        <dbReference type="ChEBI" id="CHEBI:15378"/>
        <dbReference type="ChEBI" id="CHEBI:59871"/>
        <dbReference type="ChEBI" id="CHEBI:78442"/>
        <dbReference type="ChEBI" id="CHEBI:79333"/>
        <dbReference type="EC" id="3.1.1.96"/>
    </reaction>
</comment>
<comment type="subunit">
    <text evidence="1">Homodimer.</text>
</comment>
<comment type="subcellular location">
    <subcellularLocation>
        <location evidence="1">Cytoplasm</location>
    </subcellularLocation>
</comment>
<comment type="domain">
    <text evidence="1">A Gly-cisPro motif from one monomer fits into the active site of the other monomer to allow specific chiral rejection of L-amino acids.</text>
</comment>
<comment type="similarity">
    <text evidence="2">Belongs to the DTD family.</text>
</comment>
<evidence type="ECO:0000250" key="1">
    <source>
        <dbReference type="UniProtKB" id="Q8IIS0"/>
    </source>
</evidence>
<evidence type="ECO:0000305" key="2"/>
<sequence>MKAIIQRVKSSSVTVEGEVISEIKQGLMCLIGIGRDDTKEDAEYITRKILNLRLWKNEDGTKNWDRSVQQMDYEILFVSQFTLFAQLKGNKQSYHLAMAPELSKQFYLDFLENAKKSYKPEKIKDGRFGAMMDVQLINDGPVTIQLDSKEK</sequence>
<reference key="1">
    <citation type="journal article" date="2005" name="Nature">
        <title>The genome of the social amoeba Dictyostelium discoideum.</title>
        <authorList>
            <person name="Eichinger L."/>
            <person name="Pachebat J.A."/>
            <person name="Gloeckner G."/>
            <person name="Rajandream M.A."/>
            <person name="Sucgang R."/>
            <person name="Berriman M."/>
            <person name="Song J."/>
            <person name="Olsen R."/>
            <person name="Szafranski K."/>
            <person name="Xu Q."/>
            <person name="Tunggal B."/>
            <person name="Kummerfeld S."/>
            <person name="Madera M."/>
            <person name="Konfortov B.A."/>
            <person name="Rivero F."/>
            <person name="Bankier A.T."/>
            <person name="Lehmann R."/>
            <person name="Hamlin N."/>
            <person name="Davies R."/>
            <person name="Gaudet P."/>
            <person name="Fey P."/>
            <person name="Pilcher K."/>
            <person name="Chen G."/>
            <person name="Saunders D."/>
            <person name="Sodergren E.J."/>
            <person name="Davis P."/>
            <person name="Kerhornou A."/>
            <person name="Nie X."/>
            <person name="Hall N."/>
            <person name="Anjard C."/>
            <person name="Hemphill L."/>
            <person name="Bason N."/>
            <person name="Farbrother P."/>
            <person name="Desany B."/>
            <person name="Just E."/>
            <person name="Morio T."/>
            <person name="Rost R."/>
            <person name="Churcher C.M."/>
            <person name="Cooper J."/>
            <person name="Haydock S."/>
            <person name="van Driessche N."/>
            <person name="Cronin A."/>
            <person name="Goodhead I."/>
            <person name="Muzny D.M."/>
            <person name="Mourier T."/>
            <person name="Pain A."/>
            <person name="Lu M."/>
            <person name="Harper D."/>
            <person name="Lindsay R."/>
            <person name="Hauser H."/>
            <person name="James K.D."/>
            <person name="Quiles M."/>
            <person name="Madan Babu M."/>
            <person name="Saito T."/>
            <person name="Buchrieser C."/>
            <person name="Wardroper A."/>
            <person name="Felder M."/>
            <person name="Thangavelu M."/>
            <person name="Johnson D."/>
            <person name="Knights A."/>
            <person name="Loulseged H."/>
            <person name="Mungall K.L."/>
            <person name="Oliver K."/>
            <person name="Price C."/>
            <person name="Quail M.A."/>
            <person name="Urushihara H."/>
            <person name="Hernandez J."/>
            <person name="Rabbinowitsch E."/>
            <person name="Steffen D."/>
            <person name="Sanders M."/>
            <person name="Ma J."/>
            <person name="Kohara Y."/>
            <person name="Sharp S."/>
            <person name="Simmonds M.N."/>
            <person name="Spiegler S."/>
            <person name="Tivey A."/>
            <person name="Sugano S."/>
            <person name="White B."/>
            <person name="Walker D."/>
            <person name="Woodward J.R."/>
            <person name="Winckler T."/>
            <person name="Tanaka Y."/>
            <person name="Shaulsky G."/>
            <person name="Schleicher M."/>
            <person name="Weinstock G.M."/>
            <person name="Rosenthal A."/>
            <person name="Cox E.C."/>
            <person name="Chisholm R.L."/>
            <person name="Gibbs R.A."/>
            <person name="Loomis W.F."/>
            <person name="Platzer M."/>
            <person name="Kay R.R."/>
            <person name="Williams J.G."/>
            <person name="Dear P.H."/>
            <person name="Noegel A.A."/>
            <person name="Barrell B.G."/>
            <person name="Kuspa A."/>
        </authorList>
    </citation>
    <scope>NUCLEOTIDE SEQUENCE [LARGE SCALE GENOMIC DNA]</scope>
    <source>
        <strain>AX4</strain>
    </source>
</reference>
<protein>
    <recommendedName>
        <fullName evidence="1">D-aminoacyl-tRNA deacylase</fullName>
        <shortName>DTD</shortName>
        <ecNumber evidence="1">3.1.1.96</ecNumber>
    </recommendedName>
    <alternativeName>
        <fullName evidence="1">Gly-tRNA(Ala) deacylase</fullName>
    </alternativeName>
</protein>
<gene>
    <name type="primary">dtd</name>
    <name type="ORF">DDB_G0291273</name>
</gene>
<keyword id="KW-0963">Cytoplasm</keyword>
<keyword id="KW-0378">Hydrolase</keyword>
<keyword id="KW-1185">Reference proteome</keyword>
<keyword id="KW-0694">RNA-binding</keyword>
<keyword id="KW-0820">tRNA-binding</keyword>
<dbReference type="EC" id="3.1.1.96" evidence="1"/>
<dbReference type="EMBL" id="AAFI02000177">
    <property type="protein sequence ID" value="EAL61620.1"/>
    <property type="molecule type" value="Genomic_DNA"/>
</dbReference>
<dbReference type="RefSeq" id="XP_635109.1">
    <property type="nucleotide sequence ID" value="XM_630017.1"/>
</dbReference>
<dbReference type="SMR" id="Q54EY1"/>
<dbReference type="FunCoup" id="Q54EY1">
    <property type="interactions" value="77"/>
</dbReference>
<dbReference type="STRING" id="44689.Q54EY1"/>
<dbReference type="PaxDb" id="44689-DDB0266900"/>
<dbReference type="EnsemblProtists" id="EAL61620">
    <property type="protein sequence ID" value="EAL61620"/>
    <property type="gene ID" value="DDB_G0291273"/>
</dbReference>
<dbReference type="GeneID" id="8628056"/>
<dbReference type="KEGG" id="ddi:DDB_G0291273"/>
<dbReference type="dictyBase" id="DDB_G0291273">
    <property type="gene designation" value="dtd"/>
</dbReference>
<dbReference type="VEuPathDB" id="AmoebaDB:DDB_G0291273"/>
<dbReference type="eggNOG" id="KOG3323">
    <property type="taxonomic scope" value="Eukaryota"/>
</dbReference>
<dbReference type="HOGENOM" id="CLU_076901_0_4_1"/>
<dbReference type="InParanoid" id="Q54EY1"/>
<dbReference type="OMA" id="VFGADMK"/>
<dbReference type="PhylomeDB" id="Q54EY1"/>
<dbReference type="PRO" id="PR:Q54EY1"/>
<dbReference type="Proteomes" id="UP000002195">
    <property type="component" value="Chromosome 6"/>
</dbReference>
<dbReference type="GO" id="GO:0005737">
    <property type="term" value="C:cytoplasm"/>
    <property type="evidence" value="ECO:0000318"/>
    <property type="project" value="GO_Central"/>
</dbReference>
<dbReference type="GO" id="GO:0051500">
    <property type="term" value="F:D-tyrosyl-tRNA(Tyr) deacylase activity"/>
    <property type="evidence" value="ECO:0000250"/>
    <property type="project" value="dictyBase"/>
</dbReference>
<dbReference type="GO" id="GO:0000049">
    <property type="term" value="F:tRNA binding"/>
    <property type="evidence" value="ECO:0007669"/>
    <property type="project" value="UniProtKB-KW"/>
</dbReference>
<dbReference type="GO" id="GO:0019478">
    <property type="term" value="P:D-amino acid catabolic process"/>
    <property type="evidence" value="ECO:0000250"/>
    <property type="project" value="dictyBase"/>
</dbReference>
<dbReference type="GO" id="GO:0006399">
    <property type="term" value="P:tRNA metabolic process"/>
    <property type="evidence" value="ECO:0000318"/>
    <property type="project" value="GO_Central"/>
</dbReference>
<dbReference type="CDD" id="cd00563">
    <property type="entry name" value="Dtyr_deacylase"/>
    <property type="match status" value="1"/>
</dbReference>
<dbReference type="FunFam" id="3.50.80.10:FF:000001">
    <property type="entry name" value="D-aminoacyl-tRNA deacylase"/>
    <property type="match status" value="1"/>
</dbReference>
<dbReference type="Gene3D" id="3.50.80.10">
    <property type="entry name" value="D-tyrosyl-tRNA(Tyr) deacylase"/>
    <property type="match status" value="1"/>
</dbReference>
<dbReference type="InterPro" id="IPR003732">
    <property type="entry name" value="Daa-tRNA_deacyls_DTD"/>
</dbReference>
<dbReference type="InterPro" id="IPR023509">
    <property type="entry name" value="DTD-like_sf"/>
</dbReference>
<dbReference type="NCBIfam" id="TIGR00256">
    <property type="entry name" value="D-aminoacyl-tRNA deacylase"/>
    <property type="match status" value="1"/>
</dbReference>
<dbReference type="PANTHER" id="PTHR10472:SF5">
    <property type="entry name" value="D-AMINOACYL-TRNA DEACYLASE 1"/>
    <property type="match status" value="1"/>
</dbReference>
<dbReference type="PANTHER" id="PTHR10472">
    <property type="entry name" value="D-TYROSYL-TRNA TYR DEACYLASE"/>
    <property type="match status" value="1"/>
</dbReference>
<dbReference type="Pfam" id="PF02580">
    <property type="entry name" value="Tyr_Deacylase"/>
    <property type="match status" value="1"/>
</dbReference>
<dbReference type="SUPFAM" id="SSF69500">
    <property type="entry name" value="DTD-like"/>
    <property type="match status" value="1"/>
</dbReference>
<accession>Q54EY1</accession>
<proteinExistence type="inferred from homology"/>
<organism>
    <name type="scientific">Dictyostelium discoideum</name>
    <name type="common">Social amoeba</name>
    <dbReference type="NCBI Taxonomy" id="44689"/>
    <lineage>
        <taxon>Eukaryota</taxon>
        <taxon>Amoebozoa</taxon>
        <taxon>Evosea</taxon>
        <taxon>Eumycetozoa</taxon>
        <taxon>Dictyostelia</taxon>
        <taxon>Dictyosteliales</taxon>
        <taxon>Dictyosteliaceae</taxon>
        <taxon>Dictyostelium</taxon>
    </lineage>
</organism>
<feature type="chain" id="PRO_0000328259" description="D-aminoacyl-tRNA deacylase">
    <location>
        <begin position="1"/>
        <end position="151"/>
    </location>
</feature>
<feature type="short sequence motif" description="Gly-cisPro motif, important for rejection of L-amino acids" evidence="1">
    <location>
        <begin position="140"/>
        <end position="141"/>
    </location>
</feature>